<gene>
    <name evidence="1" type="primary">proS</name>
    <name type="ordered locus">Kole_1711</name>
</gene>
<name>SYP_KOSOT</name>
<comment type="function">
    <text evidence="1">Catalyzes the attachment of proline to tRNA(Pro) in a two-step reaction: proline is first activated by ATP to form Pro-AMP and then transferred to the acceptor end of tRNA(Pro). As ProRS can inadvertently accommodate and process non-cognate amino acids such as alanine and cysteine, to avoid such errors it has two additional distinct editing activities against alanine. One activity is designated as 'pretransfer' editing and involves the tRNA(Pro)-independent hydrolysis of activated Ala-AMP. The other activity is designated 'posttransfer' editing and involves deacylation of mischarged Ala-tRNA(Pro). The misacylated Cys-tRNA(Pro) is not edited by ProRS.</text>
</comment>
<comment type="catalytic activity">
    <reaction evidence="1">
        <text>tRNA(Pro) + L-proline + ATP = L-prolyl-tRNA(Pro) + AMP + diphosphate</text>
        <dbReference type="Rhea" id="RHEA:14305"/>
        <dbReference type="Rhea" id="RHEA-COMP:9700"/>
        <dbReference type="Rhea" id="RHEA-COMP:9702"/>
        <dbReference type="ChEBI" id="CHEBI:30616"/>
        <dbReference type="ChEBI" id="CHEBI:33019"/>
        <dbReference type="ChEBI" id="CHEBI:60039"/>
        <dbReference type="ChEBI" id="CHEBI:78442"/>
        <dbReference type="ChEBI" id="CHEBI:78532"/>
        <dbReference type="ChEBI" id="CHEBI:456215"/>
        <dbReference type="EC" id="6.1.1.15"/>
    </reaction>
</comment>
<comment type="subunit">
    <text evidence="1">Homodimer.</text>
</comment>
<comment type="subcellular location">
    <subcellularLocation>
        <location evidence="1">Cytoplasm</location>
    </subcellularLocation>
</comment>
<comment type="domain">
    <text evidence="1">Consists of three domains: the N-terminal catalytic domain, the editing domain and the C-terminal anticodon-binding domain.</text>
</comment>
<comment type="similarity">
    <text evidence="1">Belongs to the class-II aminoacyl-tRNA synthetase family. ProS type 1 subfamily.</text>
</comment>
<keyword id="KW-0030">Aminoacyl-tRNA synthetase</keyword>
<keyword id="KW-0067">ATP-binding</keyword>
<keyword id="KW-0963">Cytoplasm</keyword>
<keyword id="KW-0436">Ligase</keyword>
<keyword id="KW-0547">Nucleotide-binding</keyword>
<keyword id="KW-0648">Protein biosynthesis</keyword>
<keyword id="KW-1185">Reference proteome</keyword>
<reference key="1">
    <citation type="submission" date="2009-06" db="EMBL/GenBank/DDBJ databases">
        <title>Complete sequence of Thermotogales bacterium TBF 19.5.1.</title>
        <authorList>
            <consortium name="US DOE Joint Genome Institute"/>
            <person name="Lucas S."/>
            <person name="Copeland A."/>
            <person name="Lapidus A."/>
            <person name="Glavina del Rio T."/>
            <person name="Tice H."/>
            <person name="Bruce D."/>
            <person name="Goodwin L."/>
            <person name="Pitluck S."/>
            <person name="Chertkov O."/>
            <person name="Brettin T."/>
            <person name="Detter J.C."/>
            <person name="Han C."/>
            <person name="Schmutz J."/>
            <person name="Larimer F."/>
            <person name="Land M."/>
            <person name="Hauser L."/>
            <person name="Kyrpides N."/>
            <person name="Ovchinnikova G."/>
            <person name="Noll K."/>
        </authorList>
    </citation>
    <scope>NUCLEOTIDE SEQUENCE [LARGE SCALE GENOMIC DNA]</scope>
    <source>
        <strain>ATCC BAA-1733 / DSM 21960 / TBF 19.5.1</strain>
    </source>
</reference>
<dbReference type="EC" id="6.1.1.15" evidence="1"/>
<dbReference type="EMBL" id="CP001634">
    <property type="protein sequence ID" value="ACR80397.1"/>
    <property type="molecule type" value="Genomic_DNA"/>
</dbReference>
<dbReference type="SMR" id="C5CFP9"/>
<dbReference type="STRING" id="521045.Kole_1711"/>
<dbReference type="KEGG" id="kol:Kole_1711"/>
<dbReference type="eggNOG" id="COG0442">
    <property type="taxonomic scope" value="Bacteria"/>
</dbReference>
<dbReference type="HOGENOM" id="CLU_016739_0_0_0"/>
<dbReference type="OrthoDB" id="9809052at2"/>
<dbReference type="Proteomes" id="UP000002382">
    <property type="component" value="Chromosome"/>
</dbReference>
<dbReference type="GO" id="GO:0005829">
    <property type="term" value="C:cytosol"/>
    <property type="evidence" value="ECO:0007669"/>
    <property type="project" value="TreeGrafter"/>
</dbReference>
<dbReference type="GO" id="GO:0002161">
    <property type="term" value="F:aminoacyl-tRNA deacylase activity"/>
    <property type="evidence" value="ECO:0007669"/>
    <property type="project" value="InterPro"/>
</dbReference>
<dbReference type="GO" id="GO:0005524">
    <property type="term" value="F:ATP binding"/>
    <property type="evidence" value="ECO:0007669"/>
    <property type="project" value="UniProtKB-UniRule"/>
</dbReference>
<dbReference type="GO" id="GO:0004827">
    <property type="term" value="F:proline-tRNA ligase activity"/>
    <property type="evidence" value="ECO:0007669"/>
    <property type="project" value="UniProtKB-UniRule"/>
</dbReference>
<dbReference type="GO" id="GO:0006433">
    <property type="term" value="P:prolyl-tRNA aminoacylation"/>
    <property type="evidence" value="ECO:0007669"/>
    <property type="project" value="UniProtKB-UniRule"/>
</dbReference>
<dbReference type="CDD" id="cd04334">
    <property type="entry name" value="ProRS-INS"/>
    <property type="match status" value="1"/>
</dbReference>
<dbReference type="CDD" id="cd00861">
    <property type="entry name" value="ProRS_anticodon_short"/>
    <property type="match status" value="1"/>
</dbReference>
<dbReference type="CDD" id="cd00779">
    <property type="entry name" value="ProRS_core_prok"/>
    <property type="match status" value="1"/>
</dbReference>
<dbReference type="FunFam" id="3.30.930.10:FF:000065">
    <property type="entry name" value="Proline--tRNA ligase"/>
    <property type="match status" value="1"/>
</dbReference>
<dbReference type="FunFam" id="3.30.930.10:FF:000066">
    <property type="entry name" value="Proline--tRNA ligase"/>
    <property type="match status" value="1"/>
</dbReference>
<dbReference type="Gene3D" id="3.40.50.800">
    <property type="entry name" value="Anticodon-binding domain"/>
    <property type="match status" value="1"/>
</dbReference>
<dbReference type="Gene3D" id="3.30.930.10">
    <property type="entry name" value="Bira Bifunctional Protein, Domain 2"/>
    <property type="match status" value="2"/>
</dbReference>
<dbReference type="Gene3D" id="3.90.960.10">
    <property type="entry name" value="YbaK/aminoacyl-tRNA synthetase-associated domain"/>
    <property type="match status" value="1"/>
</dbReference>
<dbReference type="HAMAP" id="MF_01569">
    <property type="entry name" value="Pro_tRNA_synth_type1"/>
    <property type="match status" value="1"/>
</dbReference>
<dbReference type="InterPro" id="IPR002314">
    <property type="entry name" value="aa-tRNA-synt_IIb"/>
</dbReference>
<dbReference type="InterPro" id="IPR006195">
    <property type="entry name" value="aa-tRNA-synth_II"/>
</dbReference>
<dbReference type="InterPro" id="IPR045864">
    <property type="entry name" value="aa-tRNA-synth_II/BPL/LPL"/>
</dbReference>
<dbReference type="InterPro" id="IPR004154">
    <property type="entry name" value="Anticodon-bd"/>
</dbReference>
<dbReference type="InterPro" id="IPR036621">
    <property type="entry name" value="Anticodon-bd_dom_sf"/>
</dbReference>
<dbReference type="InterPro" id="IPR002316">
    <property type="entry name" value="Pro-tRNA-ligase_IIa"/>
</dbReference>
<dbReference type="InterPro" id="IPR004500">
    <property type="entry name" value="Pro-tRNA-synth_IIa_bac-type"/>
</dbReference>
<dbReference type="InterPro" id="IPR023717">
    <property type="entry name" value="Pro-tRNA-Synthase_IIa_type1"/>
</dbReference>
<dbReference type="InterPro" id="IPR050062">
    <property type="entry name" value="Pro-tRNA_synthetase"/>
</dbReference>
<dbReference type="InterPro" id="IPR044140">
    <property type="entry name" value="ProRS_anticodon_short"/>
</dbReference>
<dbReference type="InterPro" id="IPR033730">
    <property type="entry name" value="ProRS_core_prok"/>
</dbReference>
<dbReference type="InterPro" id="IPR036754">
    <property type="entry name" value="YbaK/aa-tRNA-synt-asso_dom_sf"/>
</dbReference>
<dbReference type="InterPro" id="IPR007214">
    <property type="entry name" value="YbaK/aa-tRNA-synth-assoc-dom"/>
</dbReference>
<dbReference type="NCBIfam" id="NF006625">
    <property type="entry name" value="PRK09194.1"/>
    <property type="match status" value="1"/>
</dbReference>
<dbReference type="NCBIfam" id="TIGR00409">
    <property type="entry name" value="proS_fam_II"/>
    <property type="match status" value="1"/>
</dbReference>
<dbReference type="PANTHER" id="PTHR42753">
    <property type="entry name" value="MITOCHONDRIAL RIBOSOME PROTEIN L39/PROLYL-TRNA LIGASE FAMILY MEMBER"/>
    <property type="match status" value="1"/>
</dbReference>
<dbReference type="PANTHER" id="PTHR42753:SF2">
    <property type="entry name" value="PROLINE--TRNA LIGASE"/>
    <property type="match status" value="1"/>
</dbReference>
<dbReference type="Pfam" id="PF03129">
    <property type="entry name" value="HGTP_anticodon"/>
    <property type="match status" value="1"/>
</dbReference>
<dbReference type="Pfam" id="PF00587">
    <property type="entry name" value="tRNA-synt_2b"/>
    <property type="match status" value="1"/>
</dbReference>
<dbReference type="Pfam" id="PF04073">
    <property type="entry name" value="tRNA_edit"/>
    <property type="match status" value="1"/>
</dbReference>
<dbReference type="PRINTS" id="PR01046">
    <property type="entry name" value="TRNASYNTHPRO"/>
</dbReference>
<dbReference type="SUPFAM" id="SSF52954">
    <property type="entry name" value="Class II aaRS ABD-related"/>
    <property type="match status" value="1"/>
</dbReference>
<dbReference type="SUPFAM" id="SSF55681">
    <property type="entry name" value="Class II aaRS and biotin synthetases"/>
    <property type="match status" value="1"/>
</dbReference>
<dbReference type="SUPFAM" id="SSF55826">
    <property type="entry name" value="YbaK/ProRS associated domain"/>
    <property type="match status" value="1"/>
</dbReference>
<dbReference type="PROSITE" id="PS50862">
    <property type="entry name" value="AA_TRNA_LIGASE_II"/>
    <property type="match status" value="1"/>
</dbReference>
<proteinExistence type="inferred from homology"/>
<organism>
    <name type="scientific">Kosmotoga olearia (strain ATCC BAA-1733 / DSM 21960 / TBF 19.5.1)</name>
    <dbReference type="NCBI Taxonomy" id="521045"/>
    <lineage>
        <taxon>Bacteria</taxon>
        <taxon>Thermotogati</taxon>
        <taxon>Thermotogota</taxon>
        <taxon>Thermotogae</taxon>
        <taxon>Kosmotogales</taxon>
        <taxon>Kosmotogaceae</taxon>
        <taxon>Kosmotoga</taxon>
    </lineage>
</organism>
<protein>
    <recommendedName>
        <fullName evidence="1">Proline--tRNA ligase</fullName>
        <ecNumber evidence="1">6.1.1.15</ecNumber>
    </recommendedName>
    <alternativeName>
        <fullName evidence="1">Prolyl-tRNA synthetase</fullName>
        <shortName evidence="1">ProRS</shortName>
    </alternativeName>
</protein>
<evidence type="ECO:0000255" key="1">
    <source>
        <dbReference type="HAMAP-Rule" id="MF_01569"/>
    </source>
</evidence>
<feature type="chain" id="PRO_1000215532" description="Proline--tRNA ligase">
    <location>
        <begin position="1"/>
        <end position="581"/>
    </location>
</feature>
<accession>C5CFP9</accession>
<sequence>MRFSQLYAPTLKEAPSDADLVSIKLLIRGGFVRKNAAGVYTYLPLGLRVLKKVEQIVREEMAAIGCQEILMPIIQPAELWFESGRWDDYGPEMMKFKDRHERDFTLGPTHEELLTSIVRNELRSYRQFPLSLFQIANKYRDEIRPRFGLIRAREFLMKDAYSFHTDWESLDKAYKDFYKAYGRIMERIGLKYLVVEADTGAIGGDESHEFNALADTGESTLLYCDCGYAASDEKAEYMMLSDEDPDVQEEKALELVETPGVRTVQEVADFLKVTPEQIVKSLLYRGKEGFVMALIRGDQELNESKLKAHLKDQTLTMATLEEVLENFGVPIGFIGPVGMNDKVKIVADFTVKPLRNFVVGGMKEGYHYKGVCLGRDFSVDEWFDLKLAVEGDPCPKCGKPMKMTKGIELGHIFKLGTKYSEKMNGYFTDENGENHPYIMGCYGWGISRTMSAVVEQMHDEHGMIWPLSIAPFHIIITMVNPSQEQISKVGEELYELLKEKYEVLLDDRQASPGVKFKDADLIGIPLRITVGKKLTKGLIELKLRTEKQLVEVSISEGYDSVLETVEKLLKKYDPAKVAEVD</sequence>